<name>EFTU_LATSS</name>
<gene>
    <name evidence="2" type="primary">tuf</name>
    <name type="ordered locus">LCA_1063</name>
</gene>
<evidence type="ECO:0000250" key="1"/>
<evidence type="ECO:0000255" key="2">
    <source>
        <dbReference type="HAMAP-Rule" id="MF_00118"/>
    </source>
</evidence>
<accession>Q38WR7</accession>
<reference key="1">
    <citation type="journal article" date="2005" name="Nat. Biotechnol.">
        <title>The complete genome sequence of the meat-borne lactic acid bacterium Lactobacillus sakei 23K.</title>
        <authorList>
            <person name="Chaillou S."/>
            <person name="Champomier-Verges M.-C."/>
            <person name="Cornet M."/>
            <person name="Crutz-Le Coq A.-M."/>
            <person name="Dudez A.-M."/>
            <person name="Martin V."/>
            <person name="Beaufils S."/>
            <person name="Darbon-Rongere E."/>
            <person name="Bossy R."/>
            <person name="Loux V."/>
            <person name="Zagorec M."/>
        </authorList>
    </citation>
    <scope>NUCLEOTIDE SEQUENCE [LARGE SCALE GENOMIC DNA]</scope>
    <source>
        <strain>23K</strain>
    </source>
</reference>
<keyword id="KW-0963">Cytoplasm</keyword>
<keyword id="KW-0251">Elongation factor</keyword>
<keyword id="KW-0342">GTP-binding</keyword>
<keyword id="KW-0378">Hydrolase</keyword>
<keyword id="KW-0460">Magnesium</keyword>
<keyword id="KW-0479">Metal-binding</keyword>
<keyword id="KW-0547">Nucleotide-binding</keyword>
<keyword id="KW-0648">Protein biosynthesis</keyword>
<keyword id="KW-1185">Reference proteome</keyword>
<organism>
    <name type="scientific">Latilactobacillus sakei subsp. sakei (strain 23K)</name>
    <name type="common">Lactobacillus sakei subsp. sakei</name>
    <dbReference type="NCBI Taxonomy" id="314315"/>
    <lineage>
        <taxon>Bacteria</taxon>
        <taxon>Bacillati</taxon>
        <taxon>Bacillota</taxon>
        <taxon>Bacilli</taxon>
        <taxon>Lactobacillales</taxon>
        <taxon>Lactobacillaceae</taxon>
        <taxon>Latilactobacillus</taxon>
    </lineage>
</organism>
<proteinExistence type="inferred from homology"/>
<comment type="function">
    <text evidence="2">GTP hydrolase that promotes the GTP-dependent binding of aminoacyl-tRNA to the A-site of ribosomes during protein biosynthesis.</text>
</comment>
<comment type="catalytic activity">
    <reaction evidence="2">
        <text>GTP + H2O = GDP + phosphate + H(+)</text>
        <dbReference type="Rhea" id="RHEA:19669"/>
        <dbReference type="ChEBI" id="CHEBI:15377"/>
        <dbReference type="ChEBI" id="CHEBI:15378"/>
        <dbReference type="ChEBI" id="CHEBI:37565"/>
        <dbReference type="ChEBI" id="CHEBI:43474"/>
        <dbReference type="ChEBI" id="CHEBI:58189"/>
        <dbReference type="EC" id="3.6.5.3"/>
    </reaction>
    <physiologicalReaction direction="left-to-right" evidence="2">
        <dbReference type="Rhea" id="RHEA:19670"/>
    </physiologicalReaction>
</comment>
<comment type="subunit">
    <text evidence="2">Monomer.</text>
</comment>
<comment type="subcellular location">
    <subcellularLocation>
        <location evidence="2">Cytoplasm</location>
    </subcellularLocation>
</comment>
<comment type="similarity">
    <text evidence="2">Belongs to the TRAFAC class translation factor GTPase superfamily. Classic translation factor GTPase family. EF-Tu/EF-1A subfamily.</text>
</comment>
<sequence>MAEKAHYERTKPHVNIGTIGHVDHGKTTLTAAITKMLADKGLAEAQDYANIDAAPEERERGITINTAHVEYETENRHYAHIDAPGHADYVKNMITGAAQMDGAILVVAATDGPMPQTREHILLAHQVGVDYIIVFLNKTDLVDDDELTDLVEMEVRELLSEYDFPGDDIPVIRGSALGALNGNPDDVKAVEELMATVDEYVPTPERDTDKPFLMPVEDVFTITGRGTVASGRIDRGQVTVGDEVEIIGLKEEIAKTTVTGLEMFRKTLDQGQAGDNIGALLRGIDRESIERGQVLAKPGSIQTHKNFKGEVYILSKDEGGRHTPFFSNYRPQFFFHTTDVTGVIELPEGVEMVMPGDNVTFTVELISPVAIEKGLKFTVREGGRTVGAGVVSEIID</sequence>
<dbReference type="EC" id="3.6.5.3" evidence="2"/>
<dbReference type="EMBL" id="CR936503">
    <property type="protein sequence ID" value="CAI55364.1"/>
    <property type="molecule type" value="Genomic_DNA"/>
</dbReference>
<dbReference type="RefSeq" id="WP_011374763.1">
    <property type="nucleotide sequence ID" value="NC_007576.1"/>
</dbReference>
<dbReference type="SMR" id="Q38WR7"/>
<dbReference type="STRING" id="314315.LCA_1063"/>
<dbReference type="GeneID" id="57133919"/>
<dbReference type="KEGG" id="lsa:LCA_1063"/>
<dbReference type="eggNOG" id="COG0050">
    <property type="taxonomic scope" value="Bacteria"/>
</dbReference>
<dbReference type="HOGENOM" id="CLU_007265_0_1_9"/>
<dbReference type="OrthoDB" id="9804504at2"/>
<dbReference type="Proteomes" id="UP000002707">
    <property type="component" value="Chromosome"/>
</dbReference>
<dbReference type="GO" id="GO:0005829">
    <property type="term" value="C:cytosol"/>
    <property type="evidence" value="ECO:0007669"/>
    <property type="project" value="TreeGrafter"/>
</dbReference>
<dbReference type="GO" id="GO:0005525">
    <property type="term" value="F:GTP binding"/>
    <property type="evidence" value="ECO:0007669"/>
    <property type="project" value="UniProtKB-UniRule"/>
</dbReference>
<dbReference type="GO" id="GO:0003924">
    <property type="term" value="F:GTPase activity"/>
    <property type="evidence" value="ECO:0007669"/>
    <property type="project" value="InterPro"/>
</dbReference>
<dbReference type="GO" id="GO:0003746">
    <property type="term" value="F:translation elongation factor activity"/>
    <property type="evidence" value="ECO:0007669"/>
    <property type="project" value="UniProtKB-UniRule"/>
</dbReference>
<dbReference type="CDD" id="cd01884">
    <property type="entry name" value="EF_Tu"/>
    <property type="match status" value="1"/>
</dbReference>
<dbReference type="CDD" id="cd03697">
    <property type="entry name" value="EFTU_II"/>
    <property type="match status" value="1"/>
</dbReference>
<dbReference type="CDD" id="cd03707">
    <property type="entry name" value="EFTU_III"/>
    <property type="match status" value="1"/>
</dbReference>
<dbReference type="FunFam" id="2.40.30.10:FF:000001">
    <property type="entry name" value="Elongation factor Tu"/>
    <property type="match status" value="1"/>
</dbReference>
<dbReference type="FunFam" id="3.40.50.300:FF:000003">
    <property type="entry name" value="Elongation factor Tu"/>
    <property type="match status" value="1"/>
</dbReference>
<dbReference type="Gene3D" id="3.40.50.300">
    <property type="entry name" value="P-loop containing nucleotide triphosphate hydrolases"/>
    <property type="match status" value="1"/>
</dbReference>
<dbReference type="Gene3D" id="2.40.30.10">
    <property type="entry name" value="Translation factors"/>
    <property type="match status" value="2"/>
</dbReference>
<dbReference type="HAMAP" id="MF_00118_B">
    <property type="entry name" value="EF_Tu_B"/>
    <property type="match status" value="1"/>
</dbReference>
<dbReference type="InterPro" id="IPR041709">
    <property type="entry name" value="EF-Tu_GTP-bd"/>
</dbReference>
<dbReference type="InterPro" id="IPR050055">
    <property type="entry name" value="EF-Tu_GTPase"/>
</dbReference>
<dbReference type="InterPro" id="IPR004161">
    <property type="entry name" value="EFTu-like_2"/>
</dbReference>
<dbReference type="InterPro" id="IPR033720">
    <property type="entry name" value="EFTU_2"/>
</dbReference>
<dbReference type="InterPro" id="IPR031157">
    <property type="entry name" value="G_TR_CS"/>
</dbReference>
<dbReference type="InterPro" id="IPR027417">
    <property type="entry name" value="P-loop_NTPase"/>
</dbReference>
<dbReference type="InterPro" id="IPR005225">
    <property type="entry name" value="Small_GTP-bd"/>
</dbReference>
<dbReference type="InterPro" id="IPR000795">
    <property type="entry name" value="T_Tr_GTP-bd_dom"/>
</dbReference>
<dbReference type="InterPro" id="IPR009000">
    <property type="entry name" value="Transl_B-barrel_sf"/>
</dbReference>
<dbReference type="InterPro" id="IPR009001">
    <property type="entry name" value="Transl_elong_EF1A/Init_IF2_C"/>
</dbReference>
<dbReference type="InterPro" id="IPR004541">
    <property type="entry name" value="Transl_elong_EFTu/EF1A_bac/org"/>
</dbReference>
<dbReference type="InterPro" id="IPR004160">
    <property type="entry name" value="Transl_elong_EFTu/EF1A_C"/>
</dbReference>
<dbReference type="NCBIfam" id="TIGR00485">
    <property type="entry name" value="EF-Tu"/>
    <property type="match status" value="1"/>
</dbReference>
<dbReference type="NCBIfam" id="NF000766">
    <property type="entry name" value="PRK00049.1"/>
    <property type="match status" value="1"/>
</dbReference>
<dbReference type="NCBIfam" id="NF009372">
    <property type="entry name" value="PRK12735.1"/>
    <property type="match status" value="1"/>
</dbReference>
<dbReference type="NCBIfam" id="NF009373">
    <property type="entry name" value="PRK12736.1"/>
    <property type="match status" value="1"/>
</dbReference>
<dbReference type="NCBIfam" id="TIGR00231">
    <property type="entry name" value="small_GTP"/>
    <property type="match status" value="1"/>
</dbReference>
<dbReference type="PANTHER" id="PTHR43721:SF22">
    <property type="entry name" value="ELONGATION FACTOR TU, MITOCHONDRIAL"/>
    <property type="match status" value="1"/>
</dbReference>
<dbReference type="PANTHER" id="PTHR43721">
    <property type="entry name" value="ELONGATION FACTOR TU-RELATED"/>
    <property type="match status" value="1"/>
</dbReference>
<dbReference type="Pfam" id="PF00009">
    <property type="entry name" value="GTP_EFTU"/>
    <property type="match status" value="1"/>
</dbReference>
<dbReference type="Pfam" id="PF03144">
    <property type="entry name" value="GTP_EFTU_D2"/>
    <property type="match status" value="1"/>
</dbReference>
<dbReference type="Pfam" id="PF03143">
    <property type="entry name" value="GTP_EFTU_D3"/>
    <property type="match status" value="1"/>
</dbReference>
<dbReference type="PRINTS" id="PR00315">
    <property type="entry name" value="ELONGATNFCT"/>
</dbReference>
<dbReference type="SUPFAM" id="SSF50465">
    <property type="entry name" value="EF-Tu/eEF-1alpha/eIF2-gamma C-terminal domain"/>
    <property type="match status" value="1"/>
</dbReference>
<dbReference type="SUPFAM" id="SSF52540">
    <property type="entry name" value="P-loop containing nucleoside triphosphate hydrolases"/>
    <property type="match status" value="1"/>
</dbReference>
<dbReference type="SUPFAM" id="SSF50447">
    <property type="entry name" value="Translation proteins"/>
    <property type="match status" value="1"/>
</dbReference>
<dbReference type="PROSITE" id="PS00301">
    <property type="entry name" value="G_TR_1"/>
    <property type="match status" value="1"/>
</dbReference>
<dbReference type="PROSITE" id="PS51722">
    <property type="entry name" value="G_TR_2"/>
    <property type="match status" value="1"/>
</dbReference>
<protein>
    <recommendedName>
        <fullName evidence="2">Elongation factor Tu</fullName>
        <shortName evidence="2">EF-Tu</shortName>
        <ecNumber evidence="2">3.6.5.3</ecNumber>
    </recommendedName>
</protein>
<feature type="chain" id="PRO_0000337420" description="Elongation factor Tu">
    <location>
        <begin position="1"/>
        <end position="396"/>
    </location>
</feature>
<feature type="domain" description="tr-type G">
    <location>
        <begin position="11"/>
        <end position="205"/>
    </location>
</feature>
<feature type="region of interest" description="G1" evidence="1">
    <location>
        <begin position="20"/>
        <end position="27"/>
    </location>
</feature>
<feature type="region of interest" description="G2" evidence="1">
    <location>
        <begin position="61"/>
        <end position="65"/>
    </location>
</feature>
<feature type="region of interest" description="G3" evidence="1">
    <location>
        <begin position="82"/>
        <end position="85"/>
    </location>
</feature>
<feature type="region of interest" description="G4" evidence="1">
    <location>
        <begin position="137"/>
        <end position="140"/>
    </location>
</feature>
<feature type="region of interest" description="G5" evidence="1">
    <location>
        <begin position="175"/>
        <end position="177"/>
    </location>
</feature>
<feature type="binding site" evidence="2">
    <location>
        <begin position="20"/>
        <end position="27"/>
    </location>
    <ligand>
        <name>GTP</name>
        <dbReference type="ChEBI" id="CHEBI:37565"/>
    </ligand>
</feature>
<feature type="binding site" evidence="2">
    <location>
        <position position="27"/>
    </location>
    <ligand>
        <name>Mg(2+)</name>
        <dbReference type="ChEBI" id="CHEBI:18420"/>
    </ligand>
</feature>
<feature type="binding site" evidence="2">
    <location>
        <begin position="82"/>
        <end position="86"/>
    </location>
    <ligand>
        <name>GTP</name>
        <dbReference type="ChEBI" id="CHEBI:37565"/>
    </ligand>
</feature>
<feature type="binding site" evidence="2">
    <location>
        <begin position="137"/>
        <end position="140"/>
    </location>
    <ligand>
        <name>GTP</name>
        <dbReference type="ChEBI" id="CHEBI:37565"/>
    </ligand>
</feature>